<evidence type="ECO:0000255" key="1">
    <source>
        <dbReference type="HAMAP-Rule" id="MF_00402"/>
    </source>
</evidence>
<evidence type="ECO:0000305" key="2"/>
<accession>C4ZYM4</accession>
<feature type="chain" id="PRO_1000205887" description="Large ribosomal subunit protein bL19">
    <location>
        <begin position="1"/>
        <end position="115"/>
    </location>
</feature>
<name>RL19_ECOBW</name>
<dbReference type="EMBL" id="CP001396">
    <property type="protein sequence ID" value="ACR61855.1"/>
    <property type="molecule type" value="Genomic_DNA"/>
</dbReference>
<dbReference type="RefSeq" id="WP_000065253.1">
    <property type="nucleotide sequence ID" value="NC_012759.1"/>
</dbReference>
<dbReference type="SMR" id="C4ZYM4"/>
<dbReference type="GeneID" id="93774456"/>
<dbReference type="KEGG" id="ebw:BWG_2365"/>
<dbReference type="HOGENOM" id="CLU_103507_2_1_6"/>
<dbReference type="GO" id="GO:0022625">
    <property type="term" value="C:cytosolic large ribosomal subunit"/>
    <property type="evidence" value="ECO:0007669"/>
    <property type="project" value="TreeGrafter"/>
</dbReference>
<dbReference type="GO" id="GO:0003735">
    <property type="term" value="F:structural constituent of ribosome"/>
    <property type="evidence" value="ECO:0007669"/>
    <property type="project" value="InterPro"/>
</dbReference>
<dbReference type="GO" id="GO:0006412">
    <property type="term" value="P:translation"/>
    <property type="evidence" value="ECO:0007669"/>
    <property type="project" value="UniProtKB-UniRule"/>
</dbReference>
<dbReference type="FunFam" id="2.30.30.790:FF:000001">
    <property type="entry name" value="50S ribosomal protein L19"/>
    <property type="match status" value="1"/>
</dbReference>
<dbReference type="Gene3D" id="2.30.30.790">
    <property type="match status" value="1"/>
</dbReference>
<dbReference type="HAMAP" id="MF_00402">
    <property type="entry name" value="Ribosomal_bL19"/>
    <property type="match status" value="1"/>
</dbReference>
<dbReference type="InterPro" id="IPR001857">
    <property type="entry name" value="Ribosomal_bL19"/>
</dbReference>
<dbReference type="InterPro" id="IPR018257">
    <property type="entry name" value="Ribosomal_bL19_CS"/>
</dbReference>
<dbReference type="InterPro" id="IPR038657">
    <property type="entry name" value="Ribosomal_bL19_sf"/>
</dbReference>
<dbReference type="InterPro" id="IPR008991">
    <property type="entry name" value="Translation_prot_SH3-like_sf"/>
</dbReference>
<dbReference type="NCBIfam" id="TIGR01024">
    <property type="entry name" value="rplS_bact"/>
    <property type="match status" value="1"/>
</dbReference>
<dbReference type="PANTHER" id="PTHR15680:SF9">
    <property type="entry name" value="LARGE RIBOSOMAL SUBUNIT PROTEIN BL19M"/>
    <property type="match status" value="1"/>
</dbReference>
<dbReference type="PANTHER" id="PTHR15680">
    <property type="entry name" value="RIBOSOMAL PROTEIN L19"/>
    <property type="match status" value="1"/>
</dbReference>
<dbReference type="Pfam" id="PF01245">
    <property type="entry name" value="Ribosomal_L19"/>
    <property type="match status" value="1"/>
</dbReference>
<dbReference type="PIRSF" id="PIRSF002191">
    <property type="entry name" value="Ribosomal_L19"/>
    <property type="match status" value="1"/>
</dbReference>
<dbReference type="PRINTS" id="PR00061">
    <property type="entry name" value="RIBOSOMALL19"/>
</dbReference>
<dbReference type="SUPFAM" id="SSF50104">
    <property type="entry name" value="Translation proteins SH3-like domain"/>
    <property type="match status" value="1"/>
</dbReference>
<dbReference type="PROSITE" id="PS01015">
    <property type="entry name" value="RIBOSOMAL_L19"/>
    <property type="match status" value="1"/>
</dbReference>
<reference key="1">
    <citation type="journal article" date="2009" name="J. Bacteriol.">
        <title>Genomic sequencing reveals regulatory mutations and recombinational events in the widely used MC4100 lineage of Escherichia coli K-12.</title>
        <authorList>
            <person name="Ferenci T."/>
            <person name="Zhou Z."/>
            <person name="Betteridge T."/>
            <person name="Ren Y."/>
            <person name="Liu Y."/>
            <person name="Feng L."/>
            <person name="Reeves P.R."/>
            <person name="Wang L."/>
        </authorList>
    </citation>
    <scope>NUCLEOTIDE SEQUENCE [LARGE SCALE GENOMIC DNA]</scope>
    <source>
        <strain>K12 / MC4100 / BW2952</strain>
    </source>
</reference>
<keyword id="KW-0687">Ribonucleoprotein</keyword>
<keyword id="KW-0689">Ribosomal protein</keyword>
<organism>
    <name type="scientific">Escherichia coli (strain K12 / MC4100 / BW2952)</name>
    <dbReference type="NCBI Taxonomy" id="595496"/>
    <lineage>
        <taxon>Bacteria</taxon>
        <taxon>Pseudomonadati</taxon>
        <taxon>Pseudomonadota</taxon>
        <taxon>Gammaproteobacteria</taxon>
        <taxon>Enterobacterales</taxon>
        <taxon>Enterobacteriaceae</taxon>
        <taxon>Escherichia</taxon>
    </lineage>
</organism>
<protein>
    <recommendedName>
        <fullName evidence="1">Large ribosomal subunit protein bL19</fullName>
    </recommendedName>
    <alternativeName>
        <fullName evidence="2">50S ribosomal protein L19</fullName>
    </alternativeName>
</protein>
<sequence length="115" mass="13133">MSNIIKQLEQEQMKQDVPSFRPGDTVEVKVWVVEGSKKRLQAFEGVVIAIRNRGLHSAFTVRKISNGEGVERVFQTHSPVVDSISVKRRGAVRKAKLYYLRERTGKAARIKERLN</sequence>
<comment type="function">
    <text evidence="1">This protein is located at the 30S-50S ribosomal subunit interface and may play a role in the structure and function of the aminoacyl-tRNA binding site.</text>
</comment>
<comment type="similarity">
    <text evidence="1">Belongs to the bacterial ribosomal protein bL19 family.</text>
</comment>
<proteinExistence type="inferred from homology"/>
<gene>
    <name evidence="1" type="primary">rplS</name>
    <name type="ordered locus">BWG_2365</name>
</gene>